<gene>
    <name type="primary">HBB</name>
</gene>
<keyword id="KW-0903">Direct protein sequencing</keyword>
<keyword id="KW-0349">Heme</keyword>
<keyword id="KW-0408">Iron</keyword>
<keyword id="KW-0479">Metal-binding</keyword>
<keyword id="KW-0561">Oxygen transport</keyword>
<keyword id="KW-0813">Transport</keyword>
<accession>P02121</accession>
<organism>
    <name type="scientific">Phoenicopterus ruber</name>
    <name type="common">American flamingo</name>
    <name type="synonym">Caribbean flamingo</name>
    <dbReference type="NCBI Taxonomy" id="9217"/>
    <lineage>
        <taxon>Eukaryota</taxon>
        <taxon>Metazoa</taxon>
        <taxon>Chordata</taxon>
        <taxon>Craniata</taxon>
        <taxon>Vertebrata</taxon>
        <taxon>Euteleostomi</taxon>
        <taxon>Archelosauria</taxon>
        <taxon>Archosauria</taxon>
        <taxon>Dinosauria</taxon>
        <taxon>Saurischia</taxon>
        <taxon>Theropoda</taxon>
        <taxon>Coelurosauria</taxon>
        <taxon>Aves</taxon>
        <taxon>Neognathae</taxon>
        <taxon>Neoaves</taxon>
        <taxon>Mirandornithes</taxon>
        <taxon>Phoenicopteriformes</taxon>
        <taxon>Phoenicopteridae</taxon>
        <taxon>Phoenicopterus</taxon>
    </lineage>
</organism>
<sequence>VHWSAEEKQLITSLWGKVNVADCGAEALARLLIVYPWTQRFFASFGNLSSPTAILGNPMVRAHGKKVLTSFGEAVKNLDNIKNTFAQLSELHCDKLHVDPENFRLLGDILIIVLAAHFAKDFTPECQAAWQKLVRVVAHALARKYH</sequence>
<proteinExistence type="evidence at protein level"/>
<comment type="function">
    <text>Involved in oxygen transport from the lung to the various peripheral tissues.</text>
</comment>
<comment type="subunit">
    <text>Heterotetramer of two alpha chains and two beta chains.</text>
</comment>
<comment type="tissue specificity">
    <text>Red blood cells.</text>
</comment>
<comment type="similarity">
    <text evidence="1">Belongs to the globin family.</text>
</comment>
<protein>
    <recommendedName>
        <fullName>Hemoglobin subunit beta</fullName>
    </recommendedName>
    <alternativeName>
        <fullName>Beta-globin</fullName>
    </alternativeName>
    <alternativeName>
        <fullName>Hemoglobin beta chain</fullName>
    </alternativeName>
</protein>
<dbReference type="PIR" id="A02441">
    <property type="entry name" value="HBGD"/>
</dbReference>
<dbReference type="SMR" id="P02121"/>
<dbReference type="GO" id="GO:0072562">
    <property type="term" value="C:blood microparticle"/>
    <property type="evidence" value="ECO:0007669"/>
    <property type="project" value="TreeGrafter"/>
</dbReference>
<dbReference type="GO" id="GO:0031838">
    <property type="term" value="C:haptoglobin-hemoglobin complex"/>
    <property type="evidence" value="ECO:0007669"/>
    <property type="project" value="TreeGrafter"/>
</dbReference>
<dbReference type="GO" id="GO:0005833">
    <property type="term" value="C:hemoglobin complex"/>
    <property type="evidence" value="ECO:0007669"/>
    <property type="project" value="InterPro"/>
</dbReference>
<dbReference type="GO" id="GO:0031720">
    <property type="term" value="F:haptoglobin binding"/>
    <property type="evidence" value="ECO:0007669"/>
    <property type="project" value="TreeGrafter"/>
</dbReference>
<dbReference type="GO" id="GO:0020037">
    <property type="term" value="F:heme binding"/>
    <property type="evidence" value="ECO:0007669"/>
    <property type="project" value="InterPro"/>
</dbReference>
<dbReference type="GO" id="GO:0046872">
    <property type="term" value="F:metal ion binding"/>
    <property type="evidence" value="ECO:0007669"/>
    <property type="project" value="UniProtKB-KW"/>
</dbReference>
<dbReference type="GO" id="GO:0043177">
    <property type="term" value="F:organic acid binding"/>
    <property type="evidence" value="ECO:0007669"/>
    <property type="project" value="TreeGrafter"/>
</dbReference>
<dbReference type="GO" id="GO:0019825">
    <property type="term" value="F:oxygen binding"/>
    <property type="evidence" value="ECO:0007669"/>
    <property type="project" value="InterPro"/>
</dbReference>
<dbReference type="GO" id="GO:0005344">
    <property type="term" value="F:oxygen carrier activity"/>
    <property type="evidence" value="ECO:0007669"/>
    <property type="project" value="UniProtKB-KW"/>
</dbReference>
<dbReference type="GO" id="GO:0004601">
    <property type="term" value="F:peroxidase activity"/>
    <property type="evidence" value="ECO:0007669"/>
    <property type="project" value="TreeGrafter"/>
</dbReference>
<dbReference type="GO" id="GO:0042744">
    <property type="term" value="P:hydrogen peroxide catabolic process"/>
    <property type="evidence" value="ECO:0007669"/>
    <property type="project" value="TreeGrafter"/>
</dbReference>
<dbReference type="CDD" id="cd08925">
    <property type="entry name" value="Hb-beta-like"/>
    <property type="match status" value="1"/>
</dbReference>
<dbReference type="FunFam" id="1.10.490.10:FF:000001">
    <property type="entry name" value="Hemoglobin subunit beta"/>
    <property type="match status" value="1"/>
</dbReference>
<dbReference type="Gene3D" id="1.10.490.10">
    <property type="entry name" value="Globins"/>
    <property type="match status" value="1"/>
</dbReference>
<dbReference type="InterPro" id="IPR000971">
    <property type="entry name" value="Globin"/>
</dbReference>
<dbReference type="InterPro" id="IPR009050">
    <property type="entry name" value="Globin-like_sf"/>
</dbReference>
<dbReference type="InterPro" id="IPR012292">
    <property type="entry name" value="Globin/Proto"/>
</dbReference>
<dbReference type="InterPro" id="IPR002337">
    <property type="entry name" value="Hemoglobin_b"/>
</dbReference>
<dbReference type="InterPro" id="IPR050056">
    <property type="entry name" value="Hemoglobin_oxygen_transport"/>
</dbReference>
<dbReference type="PANTHER" id="PTHR11442">
    <property type="entry name" value="HEMOGLOBIN FAMILY MEMBER"/>
    <property type="match status" value="1"/>
</dbReference>
<dbReference type="PANTHER" id="PTHR11442:SF7">
    <property type="entry name" value="HEMOGLOBIN SUBUNIT EPSILON"/>
    <property type="match status" value="1"/>
</dbReference>
<dbReference type="Pfam" id="PF00042">
    <property type="entry name" value="Globin"/>
    <property type="match status" value="1"/>
</dbReference>
<dbReference type="PRINTS" id="PR00814">
    <property type="entry name" value="BETAHAEM"/>
</dbReference>
<dbReference type="SUPFAM" id="SSF46458">
    <property type="entry name" value="Globin-like"/>
    <property type="match status" value="1"/>
</dbReference>
<dbReference type="PROSITE" id="PS01033">
    <property type="entry name" value="GLOBIN"/>
    <property type="match status" value="1"/>
</dbReference>
<reference key="1">
    <citation type="journal article" date="1984" name="Hoppe-Seyler's Z. Physiol. Chem.">
        <title>The amino-acid sequence of alpha A- and beta-chains from the major hemoglobin component of American flamingo (Phoenicopterus ruber ruber).</title>
        <authorList>
            <person name="Godovac-Zimmermann J."/>
            <person name="Braunitzer G."/>
        </authorList>
    </citation>
    <scope>PROTEIN SEQUENCE</scope>
</reference>
<name>HBB_PHORB</name>
<evidence type="ECO:0000255" key="1">
    <source>
        <dbReference type="PROSITE-ProRule" id="PRU00238"/>
    </source>
</evidence>
<feature type="chain" id="PRO_0000053068" description="Hemoglobin subunit beta">
    <location>
        <begin position="1"/>
        <end position="146"/>
    </location>
</feature>
<feature type="domain" description="Globin" evidence="1">
    <location>
        <begin position="2"/>
        <end position="146"/>
    </location>
</feature>
<feature type="binding site" description="distal binding residue">
    <location>
        <position position="63"/>
    </location>
    <ligand>
        <name>heme b</name>
        <dbReference type="ChEBI" id="CHEBI:60344"/>
    </ligand>
    <ligandPart>
        <name>Fe</name>
        <dbReference type="ChEBI" id="CHEBI:18248"/>
    </ligandPart>
</feature>
<feature type="binding site" description="proximal binding residue">
    <location>
        <position position="92"/>
    </location>
    <ligand>
        <name>heme b</name>
        <dbReference type="ChEBI" id="CHEBI:60344"/>
    </ligand>
    <ligandPart>
        <name>Fe</name>
        <dbReference type="ChEBI" id="CHEBI:18248"/>
    </ligandPart>
</feature>